<dbReference type="EMBL" id="L77117">
    <property type="protein sequence ID" value="AAB99513.1"/>
    <property type="molecule type" value="Genomic_DNA"/>
</dbReference>
<dbReference type="SMR" id="P81331"/>
<dbReference type="FunCoup" id="P81331">
    <property type="interactions" value="15"/>
</dbReference>
<dbReference type="STRING" id="243232.MJ_1489.1"/>
<dbReference type="PaxDb" id="243232-MJ_1489.1"/>
<dbReference type="EnsemblBacteria" id="AAB99513">
    <property type="protein sequence ID" value="AAB99513"/>
    <property type="gene ID" value="MJ_1489.1"/>
</dbReference>
<dbReference type="KEGG" id="mja:MJ_1489.1"/>
<dbReference type="eggNOG" id="arCOG12721">
    <property type="taxonomic scope" value="Archaea"/>
</dbReference>
<dbReference type="HOGENOM" id="CLU_1840609_0_0_2"/>
<dbReference type="InParanoid" id="P81331"/>
<dbReference type="Proteomes" id="UP000000805">
    <property type="component" value="Chromosome"/>
</dbReference>
<dbReference type="GO" id="GO:0005886">
    <property type="term" value="C:plasma membrane"/>
    <property type="evidence" value="ECO:0007669"/>
    <property type="project" value="UniProtKB-SubCell"/>
</dbReference>
<comment type="subcellular location">
    <subcellularLocation>
        <location evidence="2">Cell membrane</location>
        <topology evidence="2">Multi-pass membrane protein</topology>
    </subcellularLocation>
</comment>
<feature type="chain" id="PRO_0000107373" description="Uncharacterized protein MJ1489.1">
    <location>
        <begin position="1"/>
        <end position="139"/>
    </location>
</feature>
<feature type="transmembrane region" description="Helical" evidence="1">
    <location>
        <begin position="19"/>
        <end position="39"/>
    </location>
</feature>
<feature type="transmembrane region" description="Helical" evidence="1">
    <location>
        <begin position="64"/>
        <end position="84"/>
    </location>
</feature>
<feature type="transmembrane region" description="Helical" evidence="1">
    <location>
        <begin position="89"/>
        <end position="109"/>
    </location>
</feature>
<gene>
    <name type="ordered locus">MJ1489.1</name>
</gene>
<name>YE8A_METJA</name>
<protein>
    <recommendedName>
        <fullName>Uncharacterized protein MJ1489.1</fullName>
    </recommendedName>
</protein>
<accession>P81331</accession>
<sequence length="139" mass="16198">MLIAIGIMFQPLQYPTIPCIIFMVIVGLGLLFAFQFILGYGFEMHRQITIKDRIAFRNYVVGKIFNVLVEHSYYGLLLSTFNLFVYKKAITIRLCFIFAISIVIFWILGGKLIKKSLKLCFSWFYFFINPSISHKCNSK</sequence>
<organism>
    <name type="scientific">Methanocaldococcus jannaschii (strain ATCC 43067 / DSM 2661 / JAL-1 / JCM 10045 / NBRC 100440)</name>
    <name type="common">Methanococcus jannaschii</name>
    <dbReference type="NCBI Taxonomy" id="243232"/>
    <lineage>
        <taxon>Archaea</taxon>
        <taxon>Methanobacteriati</taxon>
        <taxon>Methanobacteriota</taxon>
        <taxon>Methanomada group</taxon>
        <taxon>Methanococci</taxon>
        <taxon>Methanococcales</taxon>
        <taxon>Methanocaldococcaceae</taxon>
        <taxon>Methanocaldococcus</taxon>
    </lineage>
</organism>
<evidence type="ECO:0000255" key="1"/>
<evidence type="ECO:0000305" key="2"/>
<keyword id="KW-1003">Cell membrane</keyword>
<keyword id="KW-0472">Membrane</keyword>
<keyword id="KW-1185">Reference proteome</keyword>
<keyword id="KW-0812">Transmembrane</keyword>
<keyword id="KW-1133">Transmembrane helix</keyword>
<reference key="1">
    <citation type="journal article" date="1996" name="Science">
        <title>Complete genome sequence of the methanogenic archaeon, Methanococcus jannaschii.</title>
        <authorList>
            <person name="Bult C.J."/>
            <person name="White O."/>
            <person name="Olsen G.J."/>
            <person name="Zhou L."/>
            <person name="Fleischmann R.D."/>
            <person name="Sutton G.G."/>
            <person name="Blake J.A."/>
            <person name="FitzGerald L.M."/>
            <person name="Clayton R.A."/>
            <person name="Gocayne J.D."/>
            <person name="Kerlavage A.R."/>
            <person name="Dougherty B.A."/>
            <person name="Tomb J.-F."/>
            <person name="Adams M.D."/>
            <person name="Reich C.I."/>
            <person name="Overbeek R."/>
            <person name="Kirkness E.F."/>
            <person name="Weinstock K.G."/>
            <person name="Merrick J.M."/>
            <person name="Glodek A."/>
            <person name="Scott J.L."/>
            <person name="Geoghagen N.S.M."/>
            <person name="Weidman J.F."/>
            <person name="Fuhrmann J.L."/>
            <person name="Nguyen D."/>
            <person name="Utterback T.R."/>
            <person name="Kelley J.M."/>
            <person name="Peterson J.D."/>
            <person name="Sadow P.W."/>
            <person name="Hanna M.C."/>
            <person name="Cotton M.D."/>
            <person name="Roberts K.M."/>
            <person name="Hurst M.A."/>
            <person name="Kaine B.P."/>
            <person name="Borodovsky M."/>
            <person name="Klenk H.-P."/>
            <person name="Fraser C.M."/>
            <person name="Smith H.O."/>
            <person name="Woese C.R."/>
            <person name="Venter J.C."/>
        </authorList>
    </citation>
    <scope>NUCLEOTIDE SEQUENCE [LARGE SCALE GENOMIC DNA]</scope>
    <source>
        <strain>ATCC 43067 / DSM 2661 / JAL-1 / JCM 10045 / NBRC 100440</strain>
    </source>
</reference>
<proteinExistence type="predicted"/>